<comment type="function">
    <text evidence="1">Serine/threonine kinase that may play a role in mediating the mitogen- and stress-induced effects on transcription. May repress transcription via phosphorylation of 'Ser-1' of histone H2A. May phosphorylate histone H3 (By similarity).</text>
</comment>
<comment type="catalytic activity">
    <reaction>
        <text>L-seryl-[protein] + ATP = O-phospho-L-seryl-[protein] + ADP + H(+)</text>
        <dbReference type="Rhea" id="RHEA:17989"/>
        <dbReference type="Rhea" id="RHEA-COMP:9863"/>
        <dbReference type="Rhea" id="RHEA-COMP:11604"/>
        <dbReference type="ChEBI" id="CHEBI:15378"/>
        <dbReference type="ChEBI" id="CHEBI:29999"/>
        <dbReference type="ChEBI" id="CHEBI:30616"/>
        <dbReference type="ChEBI" id="CHEBI:83421"/>
        <dbReference type="ChEBI" id="CHEBI:456216"/>
        <dbReference type="EC" id="2.7.11.1"/>
    </reaction>
</comment>
<comment type="catalytic activity">
    <reaction>
        <text>L-threonyl-[protein] + ATP = O-phospho-L-threonyl-[protein] + ADP + H(+)</text>
        <dbReference type="Rhea" id="RHEA:46608"/>
        <dbReference type="Rhea" id="RHEA-COMP:11060"/>
        <dbReference type="Rhea" id="RHEA-COMP:11605"/>
        <dbReference type="ChEBI" id="CHEBI:15378"/>
        <dbReference type="ChEBI" id="CHEBI:30013"/>
        <dbReference type="ChEBI" id="CHEBI:30616"/>
        <dbReference type="ChEBI" id="CHEBI:61977"/>
        <dbReference type="ChEBI" id="CHEBI:456216"/>
        <dbReference type="EC" id="2.7.11.1"/>
    </reaction>
</comment>
<comment type="cofactor">
    <cofactor evidence="1">
        <name>Mg(2+)</name>
        <dbReference type="ChEBI" id="CHEBI:18420"/>
    </cofactor>
</comment>
<comment type="activity regulation">
    <text evidence="1">Activated by multiple phosphorylations on threonine and serine residues.</text>
</comment>
<comment type="alternative products">
    <event type="alternative splicing"/>
    <isoform>
        <id>Q18846-1</id>
        <name>a</name>
        <sequence type="displayed"/>
    </isoform>
    <isoform>
        <id>Q18846-2</id>
        <name>b</name>
        <sequence type="described" ref="VSP_020796"/>
    </isoform>
</comment>
<comment type="domain">
    <text evidence="1">Enzyme activity requires the presence of both kinase domains.</text>
</comment>
<comment type="similarity">
    <text evidence="5">Belongs to the protein kinase superfamily. AGC Ser/Thr protein kinase family. S6 kinase subfamily.</text>
</comment>
<organism>
    <name type="scientific">Caenorhabditis elegans</name>
    <dbReference type="NCBI Taxonomy" id="6239"/>
    <lineage>
        <taxon>Eukaryota</taxon>
        <taxon>Metazoa</taxon>
        <taxon>Ecdysozoa</taxon>
        <taxon>Nematoda</taxon>
        <taxon>Chromadorea</taxon>
        <taxon>Rhabditida</taxon>
        <taxon>Rhabditina</taxon>
        <taxon>Rhabditomorpha</taxon>
        <taxon>Rhabditoidea</taxon>
        <taxon>Rhabditidae</taxon>
        <taxon>Peloderinae</taxon>
        <taxon>Caenorhabditis</taxon>
    </lineage>
</organism>
<dbReference type="EC" id="2.7.11.1"/>
<dbReference type="EMBL" id="Z75533">
    <property type="protein sequence ID" value="CAA99814.2"/>
    <property type="molecule type" value="Genomic_DNA"/>
</dbReference>
<dbReference type="EMBL" id="Z75533">
    <property type="protein sequence ID" value="CAJ85755.1"/>
    <property type="molecule type" value="Genomic_DNA"/>
</dbReference>
<dbReference type="PIR" id="T20232">
    <property type="entry name" value="T20232"/>
</dbReference>
<dbReference type="RefSeq" id="NP_001040645.1">
    <molecule id="Q18846-1"/>
    <property type="nucleotide sequence ID" value="NM_001047180.5"/>
</dbReference>
<dbReference type="RefSeq" id="NP_001040646.1">
    <molecule id="Q18846-2"/>
    <property type="nucleotide sequence ID" value="NM_001047181.3"/>
</dbReference>
<dbReference type="SMR" id="Q18846"/>
<dbReference type="BioGRID" id="38016">
    <property type="interactions" value="16"/>
</dbReference>
<dbReference type="DIP" id="DIP-25877N"/>
<dbReference type="FunCoup" id="Q18846">
    <property type="interactions" value="1555"/>
</dbReference>
<dbReference type="IntAct" id="Q18846">
    <property type="interactions" value="1"/>
</dbReference>
<dbReference type="STRING" id="6239.C54G4.1c.1"/>
<dbReference type="iPTMnet" id="Q18846"/>
<dbReference type="PaxDb" id="6239-C54G4.1a"/>
<dbReference type="PeptideAtlas" id="Q18846"/>
<dbReference type="EnsemblMetazoa" id="C54G4.1a.1">
    <molecule id="Q18846-1"/>
    <property type="protein sequence ID" value="C54G4.1a.1"/>
    <property type="gene ID" value="WBGene00008311"/>
</dbReference>
<dbReference type="EnsemblMetazoa" id="C54G4.1b.1">
    <molecule id="Q18846-2"/>
    <property type="protein sequence ID" value="C54G4.1b.1"/>
    <property type="gene ID" value="WBGene00008311"/>
</dbReference>
<dbReference type="GeneID" id="172581"/>
<dbReference type="KEGG" id="cel:CELE_C54G4.1"/>
<dbReference type="UCSC" id="C54G4.1a">
    <molecule id="Q18846-1"/>
    <property type="organism name" value="c. elegans"/>
</dbReference>
<dbReference type="AGR" id="WB:WBGene00008311"/>
<dbReference type="CTD" id="172581"/>
<dbReference type="WormBase" id="C54G4.1a">
    <molecule id="Q18846-1"/>
    <property type="protein sequence ID" value="CE32338"/>
    <property type="gene ID" value="WBGene00008311"/>
    <property type="gene designation" value="rskn-2"/>
</dbReference>
<dbReference type="WormBase" id="C54G4.1b">
    <molecule id="Q18846-2"/>
    <property type="protein sequence ID" value="CE40030"/>
    <property type="gene ID" value="WBGene00008311"/>
    <property type="gene designation" value="rskn-2"/>
</dbReference>
<dbReference type="eggNOG" id="KOG0603">
    <property type="taxonomic scope" value="Eukaryota"/>
</dbReference>
<dbReference type="GeneTree" id="ENSGT00940000167362"/>
<dbReference type="HOGENOM" id="CLU_000288_58_0_1"/>
<dbReference type="InParanoid" id="Q18846"/>
<dbReference type="OMA" id="VEMIYAF"/>
<dbReference type="OrthoDB" id="6764942at2759"/>
<dbReference type="PhylomeDB" id="Q18846"/>
<dbReference type="Reactome" id="R-CEL-198753">
    <property type="pathway name" value="ERK/MAPK targets"/>
</dbReference>
<dbReference type="Reactome" id="R-CEL-199920">
    <property type="pathway name" value="CREB phosphorylation"/>
</dbReference>
<dbReference type="Reactome" id="R-CEL-375165">
    <property type="pathway name" value="NCAM signaling for neurite out-growth"/>
</dbReference>
<dbReference type="SignaLink" id="Q18846"/>
<dbReference type="PRO" id="PR:Q18846"/>
<dbReference type="Proteomes" id="UP000001940">
    <property type="component" value="Chromosome I"/>
</dbReference>
<dbReference type="ExpressionAtlas" id="Q18846">
    <property type="expression patterns" value="baseline"/>
</dbReference>
<dbReference type="GO" id="GO:0005737">
    <property type="term" value="C:cytoplasm"/>
    <property type="evidence" value="ECO:0000318"/>
    <property type="project" value="GO_Central"/>
</dbReference>
<dbReference type="GO" id="GO:0005654">
    <property type="term" value="C:nucleoplasm"/>
    <property type="evidence" value="ECO:0000318"/>
    <property type="project" value="GO_Central"/>
</dbReference>
<dbReference type="GO" id="GO:0005524">
    <property type="term" value="F:ATP binding"/>
    <property type="evidence" value="ECO:0007669"/>
    <property type="project" value="UniProtKB-KW"/>
</dbReference>
<dbReference type="GO" id="GO:0000287">
    <property type="term" value="F:magnesium ion binding"/>
    <property type="evidence" value="ECO:0007669"/>
    <property type="project" value="InterPro"/>
</dbReference>
<dbReference type="GO" id="GO:0106310">
    <property type="term" value="F:protein serine kinase activity"/>
    <property type="evidence" value="ECO:0007669"/>
    <property type="project" value="RHEA"/>
</dbReference>
<dbReference type="GO" id="GO:0004674">
    <property type="term" value="F:protein serine/threonine kinase activity"/>
    <property type="evidence" value="ECO:0000318"/>
    <property type="project" value="GO_Central"/>
</dbReference>
<dbReference type="GO" id="GO:0006355">
    <property type="term" value="P:regulation of DNA-templated transcription"/>
    <property type="evidence" value="ECO:0000318"/>
    <property type="project" value="GO_Central"/>
</dbReference>
<dbReference type="GO" id="GO:0038202">
    <property type="term" value="P:TORC1 signaling"/>
    <property type="evidence" value="ECO:0000318"/>
    <property type="project" value="GO_Central"/>
</dbReference>
<dbReference type="CDD" id="cd14092">
    <property type="entry name" value="STKc_MSK_C"/>
    <property type="match status" value="1"/>
</dbReference>
<dbReference type="FunFam" id="1.10.510.10:FF:000109">
    <property type="entry name" value="Ribosomal protein S6 kinase"/>
    <property type="match status" value="1"/>
</dbReference>
<dbReference type="FunFam" id="1.10.510.10:FF:000157">
    <property type="entry name" value="Ribosomal protein S6 kinase"/>
    <property type="match status" value="1"/>
</dbReference>
<dbReference type="FunFam" id="3.30.200.20:FF:000686">
    <property type="entry name" value="Ribosomal protein S6 kinase"/>
    <property type="match status" value="1"/>
</dbReference>
<dbReference type="Gene3D" id="3.30.200.20">
    <property type="entry name" value="Phosphorylase Kinase, domain 1"/>
    <property type="match status" value="2"/>
</dbReference>
<dbReference type="Gene3D" id="1.10.510.10">
    <property type="entry name" value="Transferase(Phosphotransferase) domain 1"/>
    <property type="match status" value="2"/>
</dbReference>
<dbReference type="InterPro" id="IPR000961">
    <property type="entry name" value="AGC-kinase_C"/>
</dbReference>
<dbReference type="InterPro" id="IPR011009">
    <property type="entry name" value="Kinase-like_dom_sf"/>
</dbReference>
<dbReference type="InterPro" id="IPR017892">
    <property type="entry name" value="Pkinase_C"/>
</dbReference>
<dbReference type="InterPro" id="IPR000719">
    <property type="entry name" value="Prot_kinase_dom"/>
</dbReference>
<dbReference type="InterPro" id="IPR017441">
    <property type="entry name" value="Protein_kinase_ATP_BS"/>
</dbReference>
<dbReference type="InterPro" id="IPR016239">
    <property type="entry name" value="Ribosomal_S6_kinase_II"/>
</dbReference>
<dbReference type="InterPro" id="IPR008271">
    <property type="entry name" value="Ser/Thr_kinase_AS"/>
</dbReference>
<dbReference type="PANTHER" id="PTHR24351">
    <property type="entry name" value="RIBOSOMAL PROTEIN S6 KINASE"/>
    <property type="match status" value="1"/>
</dbReference>
<dbReference type="Pfam" id="PF00069">
    <property type="entry name" value="Pkinase"/>
    <property type="match status" value="2"/>
</dbReference>
<dbReference type="Pfam" id="PF00433">
    <property type="entry name" value="Pkinase_C"/>
    <property type="match status" value="1"/>
</dbReference>
<dbReference type="PIRSF" id="PIRSF000606">
    <property type="entry name" value="Ribsml_S6_kin_2"/>
    <property type="match status" value="1"/>
</dbReference>
<dbReference type="SMART" id="SM00133">
    <property type="entry name" value="S_TK_X"/>
    <property type="match status" value="1"/>
</dbReference>
<dbReference type="SMART" id="SM00220">
    <property type="entry name" value="S_TKc"/>
    <property type="match status" value="2"/>
</dbReference>
<dbReference type="SUPFAM" id="SSF56112">
    <property type="entry name" value="Protein kinase-like (PK-like)"/>
    <property type="match status" value="2"/>
</dbReference>
<dbReference type="PROSITE" id="PS51285">
    <property type="entry name" value="AGC_KINASE_CTER"/>
    <property type="match status" value="1"/>
</dbReference>
<dbReference type="PROSITE" id="PS00107">
    <property type="entry name" value="PROTEIN_KINASE_ATP"/>
    <property type="match status" value="2"/>
</dbReference>
<dbReference type="PROSITE" id="PS50011">
    <property type="entry name" value="PROTEIN_KINASE_DOM"/>
    <property type="match status" value="2"/>
</dbReference>
<dbReference type="PROSITE" id="PS00108">
    <property type="entry name" value="PROTEIN_KINASE_ST"/>
    <property type="match status" value="2"/>
</dbReference>
<keyword id="KW-0025">Alternative splicing</keyword>
<keyword id="KW-0067">ATP-binding</keyword>
<keyword id="KW-0418">Kinase</keyword>
<keyword id="KW-0547">Nucleotide-binding</keyword>
<keyword id="KW-0597">Phosphoprotein</keyword>
<keyword id="KW-1185">Reference proteome</keyword>
<keyword id="KW-0677">Repeat</keyword>
<keyword id="KW-0723">Serine/threonine-protein kinase</keyword>
<keyword id="KW-0808">Transferase</keyword>
<proteinExistence type="inferred from homology"/>
<feature type="chain" id="PRO_0000239002" description="Putative ribosomal protein S6 kinase alpha-2">
    <location>
        <begin position="1"/>
        <end position="772"/>
    </location>
</feature>
<feature type="domain" description="Protein kinase 1" evidence="2">
    <location>
        <begin position="17"/>
        <end position="284"/>
    </location>
</feature>
<feature type="domain" description="AGC-kinase C-terminal" evidence="3">
    <location>
        <begin position="285"/>
        <end position="353"/>
    </location>
</feature>
<feature type="domain" description="Protein kinase 2" evidence="2">
    <location>
        <begin position="382"/>
        <end position="653"/>
    </location>
</feature>
<feature type="region of interest" description="Disordered" evidence="4">
    <location>
        <begin position="706"/>
        <end position="772"/>
    </location>
</feature>
<feature type="compositionally biased region" description="Polar residues" evidence="4">
    <location>
        <begin position="718"/>
        <end position="727"/>
    </location>
</feature>
<feature type="compositionally biased region" description="Polar residues" evidence="4">
    <location>
        <begin position="739"/>
        <end position="748"/>
    </location>
</feature>
<feature type="active site" description="Proton acceptor" evidence="1">
    <location>
        <position position="145"/>
    </location>
</feature>
<feature type="active site" description="Proton acceptor" evidence="1">
    <location>
        <position position="500"/>
    </location>
</feature>
<feature type="binding site" evidence="2">
    <location>
        <begin position="23"/>
        <end position="31"/>
    </location>
    <ligand>
        <name>ATP</name>
        <dbReference type="ChEBI" id="CHEBI:30616"/>
    </ligand>
</feature>
<feature type="binding site" evidence="2">
    <location>
        <position position="49"/>
    </location>
    <ligand>
        <name>ATP</name>
        <dbReference type="ChEBI" id="CHEBI:30616"/>
    </ligand>
</feature>
<feature type="binding site" evidence="2">
    <location>
        <begin position="388"/>
        <end position="396"/>
    </location>
    <ligand>
        <name>ATP</name>
        <dbReference type="ChEBI" id="CHEBI:30616"/>
    </ligand>
</feature>
<feature type="binding site" evidence="2">
    <location>
        <position position="411"/>
    </location>
    <ligand>
        <name>ATP</name>
        <dbReference type="ChEBI" id="CHEBI:30616"/>
    </ligand>
</feature>
<feature type="modified residue" description="Phosphoserine; by autocatalysis" evidence="1">
    <location>
        <position position="180"/>
    </location>
</feature>
<feature type="modified residue" description="Phosphoserine; by autocatalysis" evidence="1">
    <location>
        <position position="342"/>
    </location>
</feature>
<feature type="modified residue" description="Phosphoserine; by autocatalysis" evidence="1">
    <location>
        <position position="347"/>
    </location>
</feature>
<feature type="modified residue" description="Phosphoserine; by autocatalysis" evidence="1">
    <location>
        <position position="712"/>
    </location>
</feature>
<feature type="splice variant" id="VSP_020796" description="In isoform b." evidence="5">
    <location>
        <begin position="1"/>
        <end position="583"/>
    </location>
</feature>
<sequence>MEDILMPEGEKVSMENFALLRVLGKGAYGKVFLVRKVGGKDHNTIYAMKVLRKTRVLTKQKTLEHTMAERQVLERLRGTPFLVNLFYAFQTDTKLHIVMEYVRGGELFTHLCSRGHFDLEAARFVIAELVVAIDSLHQRKVIYRDLKLENILLDEEGHVKLTDFGLSKLFLPGELDRANSYCGTIEYMSPEVINRPEGGYSDVVDWWSLGVISFELLTGCSPFTVDGAQNSSKDIAKRIMTKKVPFPKTMDVDARDFIGQLLEKKLEKRLGYNGVDEIKNHKFMSSIDWDAAVKRTLKPVIVPRIGHDLDTQFFSAEFTSQPPLYSPAESPLNANTLFRGYSYVSPSVIFANDNVIGEELMAEDVNALLASSSFFAKYKLDKSDAGLLGKGAFSVVRRCERVVDGAQFAVKIVSQKFASQAQREARILEMVQGHPNIVQLHDVHSDPLHFYLVMEILTGNELLERIRKLERFTESEAADIMRQLVSAVKYLHDKRIVHRDLKPENILFESIDSSARLRLVDFGFARLLPNSMEQQLKSVQVLRKMTPCFTLQYAAPEVLDVGDSQPEYNEQCDLWSLGVVLFTMLSGQVPFHARSRQESATEIMQRICRAEFSFTGDAWTNVSADAKNLITGLLTVDPKKRLSMQELTAHMWLKSSASMDTPLQTPSILPSSADETFNETLRAFLHANRDGFHLLDVAAAPLMKRRGIKRQSGDKDASGNSKNSRVTQFECLPEEQEAEMTSSTSRPSNLGMMNYREPNSGTIRETRGSDSS</sequence>
<name>KS6A2_CAEEL</name>
<protein>
    <recommendedName>
        <fullName>Putative ribosomal protein S6 kinase alpha-2</fullName>
        <ecNumber>2.7.11.1</ecNumber>
    </recommendedName>
    <alternativeName>
        <fullName>Ribosomal protein S6 kinase alpha-5 homolog</fullName>
    </alternativeName>
</protein>
<accession>Q18846</accession>
<accession>Q1ZXU3</accession>
<evidence type="ECO:0000250" key="1"/>
<evidence type="ECO:0000255" key="2">
    <source>
        <dbReference type="PROSITE-ProRule" id="PRU00159"/>
    </source>
</evidence>
<evidence type="ECO:0000255" key="3">
    <source>
        <dbReference type="PROSITE-ProRule" id="PRU00618"/>
    </source>
</evidence>
<evidence type="ECO:0000256" key="4">
    <source>
        <dbReference type="SAM" id="MobiDB-lite"/>
    </source>
</evidence>
<evidence type="ECO:0000305" key="5"/>
<gene>
    <name type="primary">rskn-2</name>
    <name type="ORF">C54G4.1</name>
</gene>
<reference key="1">
    <citation type="journal article" date="1998" name="Science">
        <title>Genome sequence of the nematode C. elegans: a platform for investigating biology.</title>
        <authorList>
            <consortium name="The C. elegans sequencing consortium"/>
        </authorList>
    </citation>
    <scope>NUCLEOTIDE SEQUENCE [LARGE SCALE GENOMIC DNA]</scope>
    <scope>ALTERNATIVE SPLICING</scope>
    <source>
        <strain>Bristol N2</strain>
    </source>
</reference>